<proteinExistence type="evidence at protein level"/>
<gene>
    <name evidence="8" type="primary">BCA4</name>
    <name evidence="9" type="synonym">CA4</name>
    <name evidence="12" type="ordered locus">At1g70410</name>
    <name evidence="13" type="ORF">F17O7.5</name>
</gene>
<sequence>MAPAFGKCFMFCCAKTSPEKDEMATESYEAAIKGLNDLLSTKADLGNVAAAKIKALTAELKELDSSNSDAIERIKTGFTQFKTEKYLKNSTLFNHLAKTQTPKFLVFACSDSRVCPSHILNFQPGEAFVVRNIANMVPPFDQKRHSGVGAAVEYAVVHLKVENILVIGHSCCGGIKGLMSIEDDAAPTQSDFIENWVKIGASARNKIKEEHKDLSYDDQCNKCEKEAVNVSLGNLLSYPFVRAEVVKNTLAIRGGHYNFVKGTFDLWELDFKTTPAFAFS</sequence>
<evidence type="ECO:0000250" key="1">
    <source>
        <dbReference type="UniProtKB" id="P27140"/>
    </source>
</evidence>
<evidence type="ECO:0000250" key="2">
    <source>
        <dbReference type="UniProtKB" id="P42737"/>
    </source>
</evidence>
<evidence type="ECO:0000255" key="3"/>
<evidence type="ECO:0000269" key="4">
    <source>
    </source>
</evidence>
<evidence type="ECO:0000269" key="5">
    <source>
    </source>
</evidence>
<evidence type="ECO:0000269" key="6">
    <source>
    </source>
</evidence>
<evidence type="ECO:0000269" key="7">
    <source>
    </source>
</evidence>
<evidence type="ECO:0000303" key="8">
    <source>
    </source>
</evidence>
<evidence type="ECO:0000303" key="9">
    <source>
    </source>
</evidence>
<evidence type="ECO:0000303" key="10">
    <source ref="4"/>
</evidence>
<evidence type="ECO:0000305" key="11"/>
<evidence type="ECO:0000312" key="12">
    <source>
        <dbReference type="Araport" id="AT1G70410"/>
    </source>
</evidence>
<evidence type="ECO:0000312" key="13">
    <source>
        <dbReference type="EMBL" id="AAC18799.1"/>
    </source>
</evidence>
<evidence type="ECO:0007744" key="14">
    <source>
    </source>
</evidence>
<comment type="function">
    <text evidence="5 6">Reversible hydration of carbon dioxide. Together with BCA1, involved in the CO(2) signaling pathway which controls gas-exchange between plants and the atmosphere by modulating stomatal development and movements. Promotes water use efficiency.</text>
</comment>
<comment type="catalytic activity">
    <reaction evidence="5">
        <text>hydrogencarbonate + H(+) = CO2 + H2O</text>
        <dbReference type="Rhea" id="RHEA:10748"/>
        <dbReference type="ChEBI" id="CHEBI:15377"/>
        <dbReference type="ChEBI" id="CHEBI:15378"/>
        <dbReference type="ChEBI" id="CHEBI:16526"/>
        <dbReference type="ChEBI" id="CHEBI:17544"/>
        <dbReference type="EC" id="4.2.1.1"/>
    </reaction>
</comment>
<comment type="subunit">
    <text evidence="7">Interacts with DTX56.</text>
</comment>
<comment type="interaction">
    <interactant intactId="EBI-4430840">
        <id>Q94CE4</id>
    </interactant>
    <interactant intactId="EBI-11174814">
        <id>O49660</id>
        <label>DTX56</label>
    </interactant>
    <organismsDiffer>false</organismsDiffer>
    <experiments>2</experiments>
</comment>
<comment type="subcellular location">
    <subcellularLocation>
        <location evidence="4 5">Cell membrane</location>
        <topology evidence="4 5">Peripheral membrane protein</topology>
    </subcellularLocation>
</comment>
<comment type="alternative products">
    <event type="alternative splicing"/>
    <isoform>
        <id>Q94CE4-1</id>
        <name>1</name>
        <sequence type="displayed"/>
    </isoform>
    <isoform>
        <id>Q94CE4-2</id>
        <name>2</name>
        <sequence type="described" ref="VSP_055071"/>
    </isoform>
</comment>
<comment type="tissue specificity">
    <text evidence="4 5">Strongly expressed in aerial tissues including leaves, stems, flowers and siliques. Accumulates in both guard cells and mesophyll cells.</text>
</comment>
<comment type="disruption phenotype">
    <text evidence="5">In plants lacking both BCA1 and BCA4, impaired CO(2)-regulation of stomatal movements associated with reduced beta carbonic anhydrase activity in guard cells, and increased stomatal density.</text>
</comment>
<comment type="similarity">
    <text evidence="11">Belongs to the beta-class carbonic anhydrase family.</text>
</comment>
<comment type="sequence caution" evidence="11">
    <conflict type="erroneous initiation">
        <sequence resource="EMBL-CDS" id="BAD94475"/>
    </conflict>
    <text>Truncated N-terminus.</text>
</comment>
<dbReference type="EC" id="4.2.1.1" evidence="5"/>
<dbReference type="EMBL" id="AC003671">
    <property type="protein sequence ID" value="AAC18799.1"/>
    <property type="molecule type" value="Genomic_DNA"/>
</dbReference>
<dbReference type="EMBL" id="CP002684">
    <property type="protein sequence ID" value="AEE35057.1"/>
    <property type="molecule type" value="Genomic_DNA"/>
</dbReference>
<dbReference type="EMBL" id="CP002684">
    <property type="protein sequence ID" value="AEE35058.1"/>
    <property type="molecule type" value="Genomic_DNA"/>
</dbReference>
<dbReference type="EMBL" id="CP002684">
    <property type="protein sequence ID" value="AEE35059.1"/>
    <property type="molecule type" value="Genomic_DNA"/>
</dbReference>
<dbReference type="EMBL" id="AY034926">
    <property type="protein sequence ID" value="AAK59433.1"/>
    <property type="molecule type" value="mRNA"/>
</dbReference>
<dbReference type="EMBL" id="AY113922">
    <property type="protein sequence ID" value="AAM44970.1"/>
    <property type="molecule type" value="mRNA"/>
</dbReference>
<dbReference type="EMBL" id="AY087827">
    <property type="protein sequence ID" value="AAM65380.1"/>
    <property type="molecule type" value="mRNA"/>
</dbReference>
<dbReference type="EMBL" id="AK221439">
    <property type="protein sequence ID" value="BAD94475.1"/>
    <property type="status" value="ALT_INIT"/>
    <property type="molecule type" value="mRNA"/>
</dbReference>
<dbReference type="PIR" id="T01481">
    <property type="entry name" value="T01481"/>
</dbReference>
<dbReference type="RefSeq" id="NP_177198.1">
    <molecule id="Q94CE4-1"/>
    <property type="nucleotide sequence ID" value="NM_105709.4"/>
</dbReference>
<dbReference type="RefSeq" id="NP_849872.1">
    <molecule id="Q94CE4-2"/>
    <property type="nucleotide sequence ID" value="NM_179541.3"/>
</dbReference>
<dbReference type="RefSeq" id="NP_974119.1">
    <molecule id="Q94CE4-2"/>
    <property type="nucleotide sequence ID" value="NM_202390.3"/>
</dbReference>
<dbReference type="SMR" id="Q94CE4"/>
<dbReference type="BioGRID" id="28597">
    <property type="interactions" value="10"/>
</dbReference>
<dbReference type="FunCoup" id="Q94CE4">
    <property type="interactions" value="1252"/>
</dbReference>
<dbReference type="IntAct" id="Q94CE4">
    <property type="interactions" value="9"/>
</dbReference>
<dbReference type="STRING" id="3702.Q94CE4"/>
<dbReference type="iPTMnet" id="Q94CE4"/>
<dbReference type="PaxDb" id="3702-AT1G70410.2"/>
<dbReference type="ProteomicsDB" id="240750">
    <molecule id="Q94CE4-1"/>
</dbReference>
<dbReference type="EnsemblPlants" id="AT1G70410.1">
    <molecule id="Q94CE4-2"/>
    <property type="protein sequence ID" value="AT1G70410.1"/>
    <property type="gene ID" value="AT1G70410"/>
</dbReference>
<dbReference type="EnsemblPlants" id="AT1G70410.2">
    <molecule id="Q94CE4-1"/>
    <property type="protein sequence ID" value="AT1G70410.2"/>
    <property type="gene ID" value="AT1G70410"/>
</dbReference>
<dbReference type="EnsemblPlants" id="AT1G70410.3">
    <molecule id="Q94CE4-2"/>
    <property type="protein sequence ID" value="AT1G70410.3"/>
    <property type="gene ID" value="AT1G70410"/>
</dbReference>
<dbReference type="GeneID" id="843377"/>
<dbReference type="Gramene" id="AT1G70410.1">
    <molecule id="Q94CE4-2"/>
    <property type="protein sequence ID" value="AT1G70410.1"/>
    <property type="gene ID" value="AT1G70410"/>
</dbReference>
<dbReference type="Gramene" id="AT1G70410.2">
    <molecule id="Q94CE4-1"/>
    <property type="protein sequence ID" value="AT1G70410.2"/>
    <property type="gene ID" value="AT1G70410"/>
</dbReference>
<dbReference type="Gramene" id="AT1G70410.3">
    <molecule id="Q94CE4-2"/>
    <property type="protein sequence ID" value="AT1G70410.3"/>
    <property type="gene ID" value="AT1G70410"/>
</dbReference>
<dbReference type="KEGG" id="ath:AT1G70410"/>
<dbReference type="Araport" id="AT1G70410"/>
<dbReference type="TAIR" id="AT1G70410">
    <property type="gene designation" value="BCA4"/>
</dbReference>
<dbReference type="eggNOG" id="KOG1578">
    <property type="taxonomic scope" value="Eukaryota"/>
</dbReference>
<dbReference type="InParanoid" id="Q94CE4"/>
<dbReference type="OrthoDB" id="10248475at2759"/>
<dbReference type="PhylomeDB" id="Q94CE4"/>
<dbReference type="BioCyc" id="ARA:AT1G70410-MONOMER"/>
<dbReference type="PRO" id="PR:Q94CE4"/>
<dbReference type="Proteomes" id="UP000006548">
    <property type="component" value="Chromosome 1"/>
</dbReference>
<dbReference type="ExpressionAtlas" id="Q94CE4">
    <property type="expression patterns" value="baseline and differential"/>
</dbReference>
<dbReference type="GO" id="GO:0009941">
    <property type="term" value="C:chloroplast envelope"/>
    <property type="evidence" value="ECO:0007005"/>
    <property type="project" value="TAIR"/>
</dbReference>
<dbReference type="GO" id="GO:0005829">
    <property type="term" value="C:cytosol"/>
    <property type="evidence" value="ECO:0007005"/>
    <property type="project" value="TAIR"/>
</dbReference>
<dbReference type="GO" id="GO:0005739">
    <property type="term" value="C:mitochondrion"/>
    <property type="evidence" value="ECO:0007005"/>
    <property type="project" value="TAIR"/>
</dbReference>
<dbReference type="GO" id="GO:0005886">
    <property type="term" value="C:plasma membrane"/>
    <property type="evidence" value="ECO:0000314"/>
    <property type="project" value="UniProtKB"/>
</dbReference>
<dbReference type="GO" id="GO:0004089">
    <property type="term" value="F:carbonate dehydratase activity"/>
    <property type="evidence" value="ECO:0000315"/>
    <property type="project" value="UniProtKB"/>
</dbReference>
<dbReference type="GO" id="GO:0008270">
    <property type="term" value="F:zinc ion binding"/>
    <property type="evidence" value="ECO:0007669"/>
    <property type="project" value="InterPro"/>
</dbReference>
<dbReference type="GO" id="GO:0015976">
    <property type="term" value="P:carbon utilization"/>
    <property type="evidence" value="ECO:0007669"/>
    <property type="project" value="InterPro"/>
</dbReference>
<dbReference type="GO" id="GO:2000122">
    <property type="term" value="P:negative regulation of stomatal complex development"/>
    <property type="evidence" value="ECO:0000316"/>
    <property type="project" value="TAIR"/>
</dbReference>
<dbReference type="GO" id="GO:0010119">
    <property type="term" value="P:regulation of stomatal movement"/>
    <property type="evidence" value="ECO:0000316"/>
    <property type="project" value="TAIR"/>
</dbReference>
<dbReference type="GO" id="GO:0010037">
    <property type="term" value="P:response to carbon dioxide"/>
    <property type="evidence" value="ECO:0000316"/>
    <property type="project" value="TAIR"/>
</dbReference>
<dbReference type="CDD" id="cd00884">
    <property type="entry name" value="beta_CA_cladeB"/>
    <property type="match status" value="1"/>
</dbReference>
<dbReference type="FunFam" id="3.40.1050.10:FF:000002">
    <property type="entry name" value="Carbonic anhydrase"/>
    <property type="match status" value="1"/>
</dbReference>
<dbReference type="Gene3D" id="3.40.1050.10">
    <property type="entry name" value="Carbonic anhydrase"/>
    <property type="match status" value="1"/>
</dbReference>
<dbReference type="InterPro" id="IPR045066">
    <property type="entry name" value="Beta_CA_cladeB"/>
</dbReference>
<dbReference type="InterPro" id="IPR001765">
    <property type="entry name" value="Carbonic_anhydrase"/>
</dbReference>
<dbReference type="InterPro" id="IPR015892">
    <property type="entry name" value="Carbonic_anhydrase_CS"/>
</dbReference>
<dbReference type="InterPro" id="IPR036874">
    <property type="entry name" value="Carbonic_anhydrase_sf"/>
</dbReference>
<dbReference type="PANTHER" id="PTHR11002:SF78">
    <property type="entry name" value="BETA CARBONIC ANHYDRASE 4"/>
    <property type="match status" value="1"/>
</dbReference>
<dbReference type="PANTHER" id="PTHR11002">
    <property type="entry name" value="CARBONIC ANHYDRASE"/>
    <property type="match status" value="1"/>
</dbReference>
<dbReference type="Pfam" id="PF00484">
    <property type="entry name" value="Pro_CA"/>
    <property type="match status" value="1"/>
</dbReference>
<dbReference type="SMART" id="SM00947">
    <property type="entry name" value="Pro_CA"/>
    <property type="match status" value="1"/>
</dbReference>
<dbReference type="SUPFAM" id="SSF53056">
    <property type="entry name" value="beta-carbonic anhydrase, cab"/>
    <property type="match status" value="1"/>
</dbReference>
<dbReference type="PROSITE" id="PS00704">
    <property type="entry name" value="PROK_CO2_ANHYDRASE_1"/>
    <property type="match status" value="1"/>
</dbReference>
<dbReference type="PROSITE" id="PS00705">
    <property type="entry name" value="PROK_CO2_ANHYDRASE_2"/>
    <property type="match status" value="1"/>
</dbReference>
<keyword id="KW-0007">Acetylation</keyword>
<keyword id="KW-0025">Alternative splicing</keyword>
<keyword id="KW-1003">Cell membrane</keyword>
<keyword id="KW-0175">Coiled coil</keyword>
<keyword id="KW-0456">Lyase</keyword>
<keyword id="KW-0472">Membrane</keyword>
<keyword id="KW-0597">Phosphoprotein</keyword>
<keyword id="KW-1185">Reference proteome</keyword>
<keyword id="KW-0702">S-nitrosylation</keyword>
<keyword id="KW-0862">Zinc</keyword>
<name>BCA4_ARATH</name>
<reference key="1">
    <citation type="journal article" date="2000" name="Nature">
        <title>Sequence and analysis of chromosome 1 of the plant Arabidopsis thaliana.</title>
        <authorList>
            <person name="Theologis A."/>
            <person name="Ecker J.R."/>
            <person name="Palm C.J."/>
            <person name="Federspiel N.A."/>
            <person name="Kaul S."/>
            <person name="White O."/>
            <person name="Alonso J."/>
            <person name="Altafi H."/>
            <person name="Araujo R."/>
            <person name="Bowman C.L."/>
            <person name="Brooks S.Y."/>
            <person name="Buehler E."/>
            <person name="Chan A."/>
            <person name="Chao Q."/>
            <person name="Chen H."/>
            <person name="Cheuk R.F."/>
            <person name="Chin C.W."/>
            <person name="Chung M.K."/>
            <person name="Conn L."/>
            <person name="Conway A.B."/>
            <person name="Conway A.R."/>
            <person name="Creasy T.H."/>
            <person name="Dewar K."/>
            <person name="Dunn P."/>
            <person name="Etgu P."/>
            <person name="Feldblyum T.V."/>
            <person name="Feng J.-D."/>
            <person name="Fong B."/>
            <person name="Fujii C.Y."/>
            <person name="Gill J.E."/>
            <person name="Goldsmith A.D."/>
            <person name="Haas B."/>
            <person name="Hansen N.F."/>
            <person name="Hughes B."/>
            <person name="Huizar L."/>
            <person name="Hunter J.L."/>
            <person name="Jenkins J."/>
            <person name="Johnson-Hopson C."/>
            <person name="Khan S."/>
            <person name="Khaykin E."/>
            <person name="Kim C.J."/>
            <person name="Koo H.L."/>
            <person name="Kremenetskaia I."/>
            <person name="Kurtz D.B."/>
            <person name="Kwan A."/>
            <person name="Lam B."/>
            <person name="Langin-Hooper S."/>
            <person name="Lee A."/>
            <person name="Lee J.M."/>
            <person name="Lenz C.A."/>
            <person name="Li J.H."/>
            <person name="Li Y.-P."/>
            <person name="Lin X."/>
            <person name="Liu S.X."/>
            <person name="Liu Z.A."/>
            <person name="Luros J.S."/>
            <person name="Maiti R."/>
            <person name="Marziali A."/>
            <person name="Militscher J."/>
            <person name="Miranda M."/>
            <person name="Nguyen M."/>
            <person name="Nierman W.C."/>
            <person name="Osborne B.I."/>
            <person name="Pai G."/>
            <person name="Peterson J."/>
            <person name="Pham P.K."/>
            <person name="Rizzo M."/>
            <person name="Rooney T."/>
            <person name="Rowley D."/>
            <person name="Sakano H."/>
            <person name="Salzberg S.L."/>
            <person name="Schwartz J.R."/>
            <person name="Shinn P."/>
            <person name="Southwick A.M."/>
            <person name="Sun H."/>
            <person name="Tallon L.J."/>
            <person name="Tambunga G."/>
            <person name="Toriumi M.J."/>
            <person name="Town C.D."/>
            <person name="Utterback T."/>
            <person name="Van Aken S."/>
            <person name="Vaysberg M."/>
            <person name="Vysotskaia V.S."/>
            <person name="Walker M."/>
            <person name="Wu D."/>
            <person name="Yu G."/>
            <person name="Fraser C.M."/>
            <person name="Venter J.C."/>
            <person name="Davis R.W."/>
        </authorList>
    </citation>
    <scope>NUCLEOTIDE SEQUENCE [LARGE SCALE GENOMIC DNA]</scope>
    <source>
        <strain>cv. Columbia</strain>
    </source>
</reference>
<reference key="2">
    <citation type="journal article" date="2017" name="Plant J.">
        <title>Araport11: a complete reannotation of the Arabidopsis thaliana reference genome.</title>
        <authorList>
            <person name="Cheng C.Y."/>
            <person name="Krishnakumar V."/>
            <person name="Chan A.P."/>
            <person name="Thibaud-Nissen F."/>
            <person name="Schobel S."/>
            <person name="Town C.D."/>
        </authorList>
    </citation>
    <scope>GENOME REANNOTATION</scope>
    <source>
        <strain>cv. Columbia</strain>
    </source>
</reference>
<reference key="3">
    <citation type="journal article" date="2003" name="Science">
        <title>Empirical analysis of transcriptional activity in the Arabidopsis genome.</title>
        <authorList>
            <person name="Yamada K."/>
            <person name="Lim J."/>
            <person name="Dale J.M."/>
            <person name="Chen H."/>
            <person name="Shinn P."/>
            <person name="Palm C.J."/>
            <person name="Southwick A.M."/>
            <person name="Wu H.C."/>
            <person name="Kim C.J."/>
            <person name="Nguyen M."/>
            <person name="Pham P.K."/>
            <person name="Cheuk R.F."/>
            <person name="Karlin-Newmann G."/>
            <person name="Liu S.X."/>
            <person name="Lam B."/>
            <person name="Sakano H."/>
            <person name="Wu T."/>
            <person name="Yu G."/>
            <person name="Miranda M."/>
            <person name="Quach H.L."/>
            <person name="Tripp M."/>
            <person name="Chang C.H."/>
            <person name="Lee J.M."/>
            <person name="Toriumi M.J."/>
            <person name="Chan M.M."/>
            <person name="Tang C.C."/>
            <person name="Onodera C.S."/>
            <person name="Deng J.M."/>
            <person name="Akiyama K."/>
            <person name="Ansari Y."/>
            <person name="Arakawa T."/>
            <person name="Banh J."/>
            <person name="Banno F."/>
            <person name="Bowser L."/>
            <person name="Brooks S.Y."/>
            <person name="Carninci P."/>
            <person name="Chao Q."/>
            <person name="Choy N."/>
            <person name="Enju A."/>
            <person name="Goldsmith A.D."/>
            <person name="Gurjal M."/>
            <person name="Hansen N.F."/>
            <person name="Hayashizaki Y."/>
            <person name="Johnson-Hopson C."/>
            <person name="Hsuan V.W."/>
            <person name="Iida K."/>
            <person name="Karnes M."/>
            <person name="Khan S."/>
            <person name="Koesema E."/>
            <person name="Ishida J."/>
            <person name="Jiang P.X."/>
            <person name="Jones T."/>
            <person name="Kawai J."/>
            <person name="Kamiya A."/>
            <person name="Meyers C."/>
            <person name="Nakajima M."/>
            <person name="Narusaka M."/>
            <person name="Seki M."/>
            <person name="Sakurai T."/>
            <person name="Satou M."/>
            <person name="Tamse R."/>
            <person name="Vaysberg M."/>
            <person name="Wallender E.K."/>
            <person name="Wong C."/>
            <person name="Yamamura Y."/>
            <person name="Yuan S."/>
            <person name="Shinozaki K."/>
            <person name="Davis R.W."/>
            <person name="Theologis A."/>
            <person name="Ecker J.R."/>
        </authorList>
    </citation>
    <scope>NUCLEOTIDE SEQUENCE [LARGE SCALE MRNA] (ISOFORM 1)</scope>
    <source>
        <strain>cv. Columbia</strain>
    </source>
</reference>
<reference key="4">
    <citation type="submission" date="2002-03" db="EMBL/GenBank/DDBJ databases">
        <title>Full-length cDNA from Arabidopsis thaliana.</title>
        <authorList>
            <person name="Brover V.V."/>
            <person name="Troukhan M.E."/>
            <person name="Alexandrov N.A."/>
            <person name="Lu Y.-P."/>
            <person name="Flavell R.B."/>
            <person name="Feldmann K.A."/>
        </authorList>
    </citation>
    <scope>NUCLEOTIDE SEQUENCE [LARGE SCALE MRNA] (ISOFORM 2)</scope>
</reference>
<reference key="5">
    <citation type="submission" date="2005-03" db="EMBL/GenBank/DDBJ databases">
        <title>Large-scale analysis of RIKEN Arabidopsis full-length (RAFL) cDNAs.</title>
        <authorList>
            <person name="Totoki Y."/>
            <person name="Seki M."/>
            <person name="Ishida J."/>
            <person name="Nakajima M."/>
            <person name="Enju A."/>
            <person name="Kamiya A."/>
            <person name="Narusaka M."/>
            <person name="Shin-i T."/>
            <person name="Nakagawa M."/>
            <person name="Sakamoto N."/>
            <person name="Oishi K."/>
            <person name="Kohara Y."/>
            <person name="Kobayashi M."/>
            <person name="Toyoda A."/>
            <person name="Sakaki Y."/>
            <person name="Sakurai T."/>
            <person name="Iida K."/>
            <person name="Akiyama K."/>
            <person name="Satou M."/>
            <person name="Toyoda T."/>
            <person name="Konagaya A."/>
            <person name="Carninci P."/>
            <person name="Kawai J."/>
            <person name="Hayashizaki Y."/>
            <person name="Shinozaki K."/>
        </authorList>
    </citation>
    <scope>NUCLEOTIDE SEQUENCE [LARGE SCALE MRNA] OF 165-280 (ISOFORM 1/2)</scope>
    <source>
        <strain>cv. Columbia</strain>
    </source>
</reference>
<reference key="6">
    <citation type="journal article" date="2007" name="Plant Cell Environ.">
        <title>Characterization and expression analysis of genes encoding alpha and beta carbonic anhydrases in Arabidopsis.</title>
        <authorList>
            <person name="Fabre N."/>
            <person name="Reiter I.M."/>
            <person name="Becuwe-Linka N."/>
            <person name="Genty B."/>
            <person name="Rumeau D."/>
        </authorList>
    </citation>
    <scope>TISSUE SPECIFICITY</scope>
    <scope>SUBCELLULAR LOCATION</scope>
    <scope>GENE FAMILY</scope>
    <scope>NOMENCLATURE</scope>
    <source>
        <strain>cv. Columbia</strain>
    </source>
</reference>
<reference key="7">
    <citation type="journal article" date="2009" name="Plant Physiol.">
        <title>Large-scale Arabidopsis phosphoproteome profiling reveals novel chloroplast kinase substrates and phosphorylation networks.</title>
        <authorList>
            <person name="Reiland S."/>
            <person name="Messerli G."/>
            <person name="Baerenfaller K."/>
            <person name="Gerrits B."/>
            <person name="Endler A."/>
            <person name="Grossmann J."/>
            <person name="Gruissem W."/>
            <person name="Baginsky S."/>
        </authorList>
    </citation>
    <scope>IDENTIFICATION BY MASS SPECTROMETRY [LARGE SCALE ANALYSIS]</scope>
</reference>
<reference key="8">
    <citation type="journal article" date="2010" name="Nat. Cell Biol.">
        <title>Carbonic anhydrases are upstream regulators of CO2-controlled stomatal movements in guard cells.</title>
        <authorList>
            <person name="Hu H."/>
            <person name="Boisson-Dernier A."/>
            <person name="Israelsson-Nordstrom M."/>
            <person name="Bohmer M."/>
            <person name="Xue S."/>
            <person name="Ries A."/>
            <person name="Godoski J."/>
            <person name="Kuhn J.M."/>
            <person name="Schroeder J.I."/>
        </authorList>
    </citation>
    <scope>FUNCTION</scope>
    <scope>DISRUPTION PHENOTYPE</scope>
    <scope>CATALYTIC ACTIVITY</scope>
    <scope>TISSUE SPECIFICITY</scope>
    <scope>SUBCELLULAR LOCATION</scope>
</reference>
<reference key="9">
    <citation type="journal article" date="2012" name="Mol. Cell. Proteomics">
        <title>Comparative large-scale characterisation of plant vs. mammal proteins reveals similar and idiosyncratic N-alpha acetylation features.</title>
        <authorList>
            <person name="Bienvenut W.V."/>
            <person name="Sumpton D."/>
            <person name="Martinez A."/>
            <person name="Lilla S."/>
            <person name="Espagne C."/>
            <person name="Meinnel T."/>
            <person name="Giglione C."/>
        </authorList>
    </citation>
    <scope>ACETYLATION [LARGE SCALE ANALYSIS] AT ALA-2 (ISOFORM 2)</scope>
    <scope>CLEAVAGE OF INITIATOR METHIONINE [LARGE SCALE ANALYSIS] (ISOFORM 2)</scope>
    <scope>IDENTIFICATION BY MASS SPECTROMETRY [LARGE SCALE ANALYSIS]</scope>
</reference>
<reference key="10">
    <citation type="journal article" date="2014" name="Nature">
        <title>Carbonic anhydrases, EPF2 and a novel protease mediate CO2 control of stomatal development.</title>
        <authorList>
            <person name="Engineer C.B."/>
            <person name="Ghassemian M."/>
            <person name="Anderson J.C."/>
            <person name="Peck S.C."/>
            <person name="Hu H."/>
            <person name="Schroeder J.I."/>
        </authorList>
    </citation>
    <scope>FUNCTION</scope>
</reference>
<reference key="11">
    <citation type="journal article" date="2015" name="Nat. Commun.">
        <title>A molecular pathway for CO(2) response in Arabidopsis guard cells.</title>
        <authorList>
            <person name="Tian W."/>
            <person name="Hou C."/>
            <person name="Ren Z."/>
            <person name="Pan Y."/>
            <person name="Jia J."/>
            <person name="Zhang H."/>
            <person name="Bai F."/>
            <person name="Zhang P."/>
            <person name="Zhu H."/>
            <person name="He Y."/>
            <person name="Luo S."/>
            <person name="Li L."/>
            <person name="Luan S."/>
        </authorList>
    </citation>
    <scope>INTERACTION WITH DTX56</scope>
</reference>
<protein>
    <recommendedName>
        <fullName evidence="8">Beta carbonic anhydrase 4</fullName>
        <shortName evidence="8">AtbCA4</shortName>
        <shortName evidence="8">AtbetaCA4</shortName>
        <ecNumber evidence="5">4.2.1.1</ecNumber>
    </recommendedName>
    <alternativeName>
        <fullName evidence="8">Beta carbonate dehydratase 4</fullName>
    </alternativeName>
</protein>
<accession>Q94CE4</accession>
<accession>O64595</accession>
<accession>Q56Y84</accession>
<feature type="chain" id="PRO_0000429736" description="Beta carbonic anhydrase 4">
    <location>
        <begin position="1"/>
        <end position="280"/>
    </location>
</feature>
<feature type="coiled-coil region" evidence="3">
    <location>
        <begin position="47"/>
        <end position="76"/>
    </location>
</feature>
<feature type="modified residue" description="Phosphothreonine" evidence="2">
    <location>
        <position position="57"/>
    </location>
</feature>
<feature type="modified residue" description="Phosphoserine" evidence="2">
    <location>
        <position position="117"/>
    </location>
</feature>
<feature type="modified residue" description="S-nitrosocysteine" evidence="1">
    <location>
        <position position="223"/>
    </location>
</feature>
<feature type="splice variant" id="VSP_055071" description="In isoform 2." evidence="10">
    <location>
        <begin position="1"/>
        <end position="22"/>
    </location>
</feature>
<feature type="initiator methionine" description="Removed" evidence="14">
    <location sequence="Q94CE4-2">
        <position position="1"/>
    </location>
</feature>
<feature type="modified residue" description="N-acetylalanine" evidence="14">
    <location sequence="Q94CE4-2">
        <position position="2"/>
    </location>
</feature>
<organism>
    <name type="scientific">Arabidopsis thaliana</name>
    <name type="common">Mouse-ear cress</name>
    <dbReference type="NCBI Taxonomy" id="3702"/>
    <lineage>
        <taxon>Eukaryota</taxon>
        <taxon>Viridiplantae</taxon>
        <taxon>Streptophyta</taxon>
        <taxon>Embryophyta</taxon>
        <taxon>Tracheophyta</taxon>
        <taxon>Spermatophyta</taxon>
        <taxon>Magnoliopsida</taxon>
        <taxon>eudicotyledons</taxon>
        <taxon>Gunneridae</taxon>
        <taxon>Pentapetalae</taxon>
        <taxon>rosids</taxon>
        <taxon>malvids</taxon>
        <taxon>Brassicales</taxon>
        <taxon>Brassicaceae</taxon>
        <taxon>Camelineae</taxon>
        <taxon>Arabidopsis</taxon>
    </lineage>
</organism>